<proteinExistence type="inferred from homology"/>
<gene>
    <name type="primary">EST3</name>
    <name type="ordered locus">ADL016C</name>
    <name type="ORF">AGOS_ADL016C</name>
</gene>
<dbReference type="EMBL" id="AE016817">
    <property type="protein sequence ID" value="AAS51905.1"/>
    <property type="molecule type" value="Genomic_DNA"/>
</dbReference>
<dbReference type="RefSeq" id="NP_984081.1">
    <property type="nucleotide sequence ID" value="NM_209434.3"/>
</dbReference>
<dbReference type="SMR" id="Q75AD3"/>
<dbReference type="FunCoup" id="Q75AD3">
    <property type="interactions" value="52"/>
</dbReference>
<dbReference type="STRING" id="284811.Q75AD3"/>
<dbReference type="EnsemblFungi" id="AAS51905">
    <property type="protein sequence ID" value="AAS51905"/>
    <property type="gene ID" value="AGOS_ADL016C"/>
</dbReference>
<dbReference type="GeneID" id="4620229"/>
<dbReference type="KEGG" id="ago:AGOS_ADL016C"/>
<dbReference type="eggNOG" id="ENOG502S5B8">
    <property type="taxonomic scope" value="Eukaryota"/>
</dbReference>
<dbReference type="HOGENOM" id="CLU_1489823_0_0_1"/>
<dbReference type="InParanoid" id="Q75AD3"/>
<dbReference type="OMA" id="NCRITSE"/>
<dbReference type="OrthoDB" id="4069148at2759"/>
<dbReference type="Proteomes" id="UP000000591">
    <property type="component" value="Chromosome IV"/>
</dbReference>
<dbReference type="GO" id="GO:0000781">
    <property type="term" value="C:chromosome, telomeric region"/>
    <property type="evidence" value="ECO:0007669"/>
    <property type="project" value="UniProtKB-SubCell"/>
</dbReference>
<dbReference type="GO" id="GO:0005697">
    <property type="term" value="C:telomerase holoenzyme complex"/>
    <property type="evidence" value="ECO:0007669"/>
    <property type="project" value="EnsemblFungi"/>
</dbReference>
<dbReference type="GO" id="GO:0033677">
    <property type="term" value="F:DNA/RNA helicase activity"/>
    <property type="evidence" value="ECO:0007669"/>
    <property type="project" value="EnsemblFungi"/>
</dbReference>
<dbReference type="GO" id="GO:0003924">
    <property type="term" value="F:GTPase activity"/>
    <property type="evidence" value="ECO:0007669"/>
    <property type="project" value="EnsemblFungi"/>
</dbReference>
<dbReference type="GO" id="GO:0042162">
    <property type="term" value="F:telomeric DNA binding"/>
    <property type="evidence" value="ECO:0007669"/>
    <property type="project" value="EnsemblFungi"/>
</dbReference>
<dbReference type="GO" id="GO:0007004">
    <property type="term" value="P:telomere maintenance via telomerase"/>
    <property type="evidence" value="ECO:0007669"/>
    <property type="project" value="EnsemblFungi"/>
</dbReference>
<dbReference type="Gene3D" id="2.40.50.960">
    <property type="match status" value="1"/>
</dbReference>
<dbReference type="InterPro" id="IPR019437">
    <property type="entry name" value="TPP1/Est3"/>
</dbReference>
<dbReference type="Pfam" id="PF10341">
    <property type="entry name" value="TPP1"/>
    <property type="match status" value="1"/>
</dbReference>
<evidence type="ECO:0000250" key="1"/>
<evidence type="ECO:0000305" key="2"/>
<sequence>MPKVVLASRAHKADSIFLREWLVDAVVPALERSGACAPWAGVECFIPALPPATATLSLEPTVIQNPKRFLRIVRFTRVHDFAVCAVARDAGCCILVEFTPHCVSNFERRYHQRITSSTVNSLFVIGNTSLLFYARSDAAAAFEVPALMNGSSTLPVLRVGDCAIFDQDQVESHRRFPLVQEHPRFVQSLDMAMQGSVLSRYT</sequence>
<name>EST3_EREGS</name>
<reference key="1">
    <citation type="journal article" date="2004" name="Science">
        <title>The Ashbya gossypii genome as a tool for mapping the ancient Saccharomyces cerevisiae genome.</title>
        <authorList>
            <person name="Dietrich F.S."/>
            <person name="Voegeli S."/>
            <person name="Brachat S."/>
            <person name="Lerch A."/>
            <person name="Gates K."/>
            <person name="Steiner S."/>
            <person name="Mohr C."/>
            <person name="Poehlmann R."/>
            <person name="Luedi P."/>
            <person name="Choi S."/>
            <person name="Wing R.A."/>
            <person name="Flavier A."/>
            <person name="Gaffney T.D."/>
            <person name="Philippsen P."/>
        </authorList>
    </citation>
    <scope>NUCLEOTIDE SEQUENCE [LARGE SCALE GENOMIC DNA]</scope>
    <source>
        <strain>ATCC 10895 / CBS 109.51 / FGSC 9923 / NRRL Y-1056</strain>
    </source>
</reference>
<reference key="2">
    <citation type="journal article" date="2013" name="G3 (Bethesda)">
        <title>Genomes of Ashbya fungi isolated from insects reveal four mating-type loci, numerous translocations, lack of transposons, and distinct gene duplications.</title>
        <authorList>
            <person name="Dietrich F.S."/>
            <person name="Voegeli S."/>
            <person name="Kuo S."/>
            <person name="Philippsen P."/>
        </authorList>
    </citation>
    <scope>GENOME REANNOTATION</scope>
    <source>
        <strain>ATCC 10895 / CBS 109.51 / FGSC 9923 / NRRL Y-1056</strain>
    </source>
</reference>
<feature type="chain" id="PRO_0000301750" description="Telomere replication protein EST3">
    <location>
        <begin position="1"/>
        <end position="202"/>
    </location>
</feature>
<protein>
    <recommendedName>
        <fullName>Telomere replication protein EST3</fullName>
    </recommendedName>
</protein>
<keyword id="KW-0158">Chromosome</keyword>
<keyword id="KW-0539">Nucleus</keyword>
<keyword id="KW-1185">Reference proteome</keyword>
<keyword id="KW-0779">Telomere</keyword>
<accession>Q75AD3</accession>
<organism>
    <name type="scientific">Eremothecium gossypii (strain ATCC 10895 / CBS 109.51 / FGSC 9923 / NRRL Y-1056)</name>
    <name type="common">Yeast</name>
    <name type="synonym">Ashbya gossypii</name>
    <dbReference type="NCBI Taxonomy" id="284811"/>
    <lineage>
        <taxon>Eukaryota</taxon>
        <taxon>Fungi</taxon>
        <taxon>Dikarya</taxon>
        <taxon>Ascomycota</taxon>
        <taxon>Saccharomycotina</taxon>
        <taxon>Saccharomycetes</taxon>
        <taxon>Saccharomycetales</taxon>
        <taxon>Saccharomycetaceae</taxon>
        <taxon>Eremothecium</taxon>
    </lineage>
</organism>
<comment type="function">
    <text evidence="1">Component of the telomerase complex involved in telomere replication. Stimulates RNA/DNA heteroduplex unwinding which favors the telomere replication by the telomerase (By similarity).</text>
</comment>
<comment type="subunit">
    <text evidence="1">Component of the telomerase complex.</text>
</comment>
<comment type="subcellular location">
    <subcellularLocation>
        <location evidence="2">Nucleus</location>
    </subcellularLocation>
    <subcellularLocation>
        <location evidence="2">Chromosome</location>
        <location evidence="2">Telomere</location>
    </subcellularLocation>
</comment>
<comment type="similarity">
    <text evidence="2">Belongs to the EST3 family.</text>
</comment>